<name>PP422_ARATH</name>
<proteinExistence type="evidence at transcript level"/>
<dbReference type="EMBL" id="AB018117">
    <property type="protein sequence ID" value="BAA97170.1"/>
    <property type="molecule type" value="Genomic_DNA"/>
</dbReference>
<dbReference type="EMBL" id="CP002688">
    <property type="protein sequence ID" value="AED95502.1"/>
    <property type="molecule type" value="Genomic_DNA"/>
</dbReference>
<dbReference type="RefSeq" id="NP_199547.1">
    <property type="nucleotide sequence ID" value="NM_124107.1"/>
</dbReference>
<dbReference type="SMR" id="Q9LVS3"/>
<dbReference type="FunCoup" id="Q9LVS3">
    <property type="interactions" value="224"/>
</dbReference>
<dbReference type="PaxDb" id="3702-AT5G47360.1"/>
<dbReference type="ProteomicsDB" id="249303"/>
<dbReference type="EnsemblPlants" id="AT5G47360.1">
    <property type="protein sequence ID" value="AT5G47360.1"/>
    <property type="gene ID" value="AT5G47360"/>
</dbReference>
<dbReference type="GeneID" id="834783"/>
<dbReference type="Gramene" id="AT5G47360.1">
    <property type="protein sequence ID" value="AT5G47360.1"/>
    <property type="gene ID" value="AT5G47360"/>
</dbReference>
<dbReference type="KEGG" id="ath:AT5G47360"/>
<dbReference type="Araport" id="AT5G47360"/>
<dbReference type="TAIR" id="AT5G47360"/>
<dbReference type="eggNOG" id="KOG4197">
    <property type="taxonomic scope" value="Eukaryota"/>
</dbReference>
<dbReference type="HOGENOM" id="CLU_002706_49_0_1"/>
<dbReference type="InParanoid" id="Q9LVS3"/>
<dbReference type="OMA" id="FFIWAGT"/>
<dbReference type="PhylomeDB" id="Q9LVS3"/>
<dbReference type="PRO" id="PR:Q9LVS3"/>
<dbReference type="Proteomes" id="UP000006548">
    <property type="component" value="Chromosome 5"/>
</dbReference>
<dbReference type="ExpressionAtlas" id="Q9LVS3">
    <property type="expression patterns" value="baseline and differential"/>
</dbReference>
<dbReference type="Gene3D" id="1.25.40.10">
    <property type="entry name" value="Tetratricopeptide repeat domain"/>
    <property type="match status" value="4"/>
</dbReference>
<dbReference type="InterPro" id="IPR002885">
    <property type="entry name" value="Pentatricopeptide_rpt"/>
</dbReference>
<dbReference type="InterPro" id="IPR011990">
    <property type="entry name" value="TPR-like_helical_dom_sf"/>
</dbReference>
<dbReference type="NCBIfam" id="TIGR00756">
    <property type="entry name" value="PPR"/>
    <property type="match status" value="5"/>
</dbReference>
<dbReference type="PANTHER" id="PTHR47936:SF1">
    <property type="entry name" value="PENTATRICOPEPTIDE REPEAT-CONTAINING PROTEIN GUN1, CHLOROPLASTIC"/>
    <property type="match status" value="1"/>
</dbReference>
<dbReference type="PANTHER" id="PTHR47936">
    <property type="entry name" value="PPR_LONG DOMAIN-CONTAINING PROTEIN"/>
    <property type="match status" value="1"/>
</dbReference>
<dbReference type="Pfam" id="PF01535">
    <property type="entry name" value="PPR"/>
    <property type="match status" value="2"/>
</dbReference>
<dbReference type="Pfam" id="PF13041">
    <property type="entry name" value="PPR_2"/>
    <property type="match status" value="2"/>
</dbReference>
<dbReference type="PROSITE" id="PS51375">
    <property type="entry name" value="PPR"/>
    <property type="match status" value="8"/>
</dbReference>
<keyword id="KW-1185">Reference proteome</keyword>
<keyword id="KW-0677">Repeat</keyword>
<sequence length="477" mass="53784">MPNSLISRLVSPSLRSQPSKISALRFLTTVSAAERLYGQLQGCTSNLEKELASANVQLDSSCINEVLRRCDPNQFQSGLRFFIWAGTLSSHRHSAYMYTKACDILKIRAKPDLIKYVIESYRKEECFVNVKTMRIVLTLCNQANLADEALWVLRKFPEFNVCADTVAYNLVIRLFADKGDLNIADMLIKEMDCVGLYPDVITYTSMINGYCNAGKIDDAWRLAKEMSKHDCVLNSVTYSRILEGVCKSGDMERALELLAEMEKEDGGGLISPNAVTYTLVIQAFCEKRRVEEALLVLDRMGNRGCMPNRVTACVLIQGVLENDEDVKALSKLIDKLVKLGGVSLSECFSSATVSLIRMKRWEEAEKIFRLMLVRGVRPDGLACSHVFRELCLLERYLDCFLLYQEIEKKDVKSTIDSDIHAVLLLGLCQQGNSWEAAKLAKSMLDKKMRLKVSHVEKIIEALKKTGDEDLMSRFSID</sequence>
<feature type="chain" id="PRO_0000363559" description="Pentatricopeptide repeat-containing protein At5g47360">
    <location>
        <begin position="1"/>
        <end position="477"/>
    </location>
</feature>
<feature type="repeat" description="PPR 1">
    <location>
        <begin position="129"/>
        <end position="163"/>
    </location>
</feature>
<feature type="repeat" description="PPR 2">
    <location>
        <begin position="164"/>
        <end position="198"/>
    </location>
</feature>
<feature type="repeat" description="PPR 3">
    <location>
        <begin position="199"/>
        <end position="233"/>
    </location>
</feature>
<feature type="repeat" description="PPR 4">
    <location>
        <begin position="234"/>
        <end position="264"/>
    </location>
</feature>
<feature type="repeat" description="PPR 5">
    <location>
        <begin position="273"/>
        <end position="307"/>
    </location>
</feature>
<feature type="repeat" description="PPR 6">
    <location>
        <begin position="308"/>
        <end position="343"/>
    </location>
</feature>
<feature type="repeat" description="PPR 7">
    <location>
        <begin position="344"/>
        <end position="378"/>
    </location>
</feature>
<feature type="repeat" description="PPR 8">
    <location>
        <begin position="379"/>
        <end position="413"/>
    </location>
</feature>
<feature type="repeat" description="PPR 9">
    <location>
        <begin position="416"/>
        <end position="450"/>
    </location>
</feature>
<evidence type="ECO:0000305" key="1"/>
<accession>Q9LVS3</accession>
<protein>
    <recommendedName>
        <fullName>Pentatricopeptide repeat-containing protein At5g47360</fullName>
    </recommendedName>
</protein>
<organism>
    <name type="scientific">Arabidopsis thaliana</name>
    <name type="common">Mouse-ear cress</name>
    <dbReference type="NCBI Taxonomy" id="3702"/>
    <lineage>
        <taxon>Eukaryota</taxon>
        <taxon>Viridiplantae</taxon>
        <taxon>Streptophyta</taxon>
        <taxon>Embryophyta</taxon>
        <taxon>Tracheophyta</taxon>
        <taxon>Spermatophyta</taxon>
        <taxon>Magnoliopsida</taxon>
        <taxon>eudicotyledons</taxon>
        <taxon>Gunneridae</taxon>
        <taxon>Pentapetalae</taxon>
        <taxon>rosids</taxon>
        <taxon>malvids</taxon>
        <taxon>Brassicales</taxon>
        <taxon>Brassicaceae</taxon>
        <taxon>Camelineae</taxon>
        <taxon>Arabidopsis</taxon>
    </lineage>
</organism>
<comment type="similarity">
    <text evidence="1">Belongs to the PPR family. P subfamily.</text>
</comment>
<comment type="online information" name="Pentatricopeptide repeat proteins">
    <link uri="https://ppr.plantenergy.uwa.edu.au"/>
</comment>
<reference key="1">
    <citation type="journal article" date="2000" name="DNA Res.">
        <title>Structural analysis of Arabidopsis thaliana chromosome 5. X. Sequence features of the regions of 3,076,755 bp covered by sixty P1 and TAC clones.</title>
        <authorList>
            <person name="Sato S."/>
            <person name="Nakamura Y."/>
            <person name="Kaneko T."/>
            <person name="Katoh T."/>
            <person name="Asamizu E."/>
            <person name="Kotani H."/>
            <person name="Tabata S."/>
        </authorList>
    </citation>
    <scope>NUCLEOTIDE SEQUENCE [LARGE SCALE GENOMIC DNA]</scope>
    <source>
        <strain>cv. Columbia</strain>
    </source>
</reference>
<reference key="2">
    <citation type="journal article" date="2017" name="Plant J.">
        <title>Araport11: a complete reannotation of the Arabidopsis thaliana reference genome.</title>
        <authorList>
            <person name="Cheng C.Y."/>
            <person name="Krishnakumar V."/>
            <person name="Chan A.P."/>
            <person name="Thibaud-Nissen F."/>
            <person name="Schobel S."/>
            <person name="Town C.D."/>
        </authorList>
    </citation>
    <scope>GENOME REANNOTATION</scope>
    <source>
        <strain>cv. Columbia</strain>
    </source>
</reference>
<reference key="3">
    <citation type="journal article" date="2004" name="Plant Cell">
        <title>Genome-wide analysis of Arabidopsis pentatricopeptide repeat proteins reveals their essential role in organelle biogenesis.</title>
        <authorList>
            <person name="Lurin C."/>
            <person name="Andres C."/>
            <person name="Aubourg S."/>
            <person name="Bellaoui M."/>
            <person name="Bitton F."/>
            <person name="Bruyere C."/>
            <person name="Caboche M."/>
            <person name="Debast C."/>
            <person name="Gualberto J."/>
            <person name="Hoffmann B."/>
            <person name="Lecharny A."/>
            <person name="Le Ret M."/>
            <person name="Martin-Magniette M.-L."/>
            <person name="Mireau H."/>
            <person name="Peeters N."/>
            <person name="Renou J.-P."/>
            <person name="Szurek B."/>
            <person name="Taconnat L."/>
            <person name="Small I."/>
        </authorList>
    </citation>
    <scope>GENE FAMILY</scope>
</reference>
<gene>
    <name type="ordered locus">At5g47360</name>
    <name type="ORF">MQL5.22</name>
</gene>